<comment type="function">
    <text evidence="1">Catalyzes the reversible transfer of the terminal phosphate group between ATP and AMP. Plays an important role in cellular energy homeostasis and in adenine nucleotide metabolism.</text>
</comment>
<comment type="catalytic activity">
    <reaction evidence="1">
        <text>AMP + ATP = 2 ADP</text>
        <dbReference type="Rhea" id="RHEA:12973"/>
        <dbReference type="ChEBI" id="CHEBI:30616"/>
        <dbReference type="ChEBI" id="CHEBI:456215"/>
        <dbReference type="ChEBI" id="CHEBI:456216"/>
        <dbReference type="EC" id="2.7.4.3"/>
    </reaction>
</comment>
<comment type="pathway">
    <text evidence="1">Purine metabolism; AMP biosynthesis via salvage pathway; AMP from ADP: step 1/1.</text>
</comment>
<comment type="subunit">
    <text evidence="1">Monomer.</text>
</comment>
<comment type="subcellular location">
    <subcellularLocation>
        <location evidence="1">Cytoplasm</location>
    </subcellularLocation>
</comment>
<comment type="domain">
    <text evidence="1">Consists of three domains, a large central CORE domain and two small peripheral domains, NMPbind and LID, which undergo movements during catalysis. The LID domain closes over the site of phosphoryl transfer upon ATP binding. Assembling and dissambling the active center during each catalytic cycle provides an effective means to prevent ATP hydrolysis.</text>
</comment>
<comment type="similarity">
    <text evidence="1">Belongs to the adenylate kinase family.</text>
</comment>
<comment type="sequence caution" evidence="2">
    <conflict type="erroneous initiation">
        <sequence resource="EMBL-CDS" id="CAC45956"/>
    </conflict>
</comment>
<sequence length="192" mass="21007">MRLIFLGPPGAGKGTQAKLLTERYGIPQLSTGDMLRTAVAQATEVGKRAKAVMDAGQLVSDEIVNEIVSDRIDSADCARGFILDGYPRTVPQAVALDRMLEEKGLKLDAVIELKVDEAALVRRMENRVTETVAAGGTVRSDDNPEAFRRRLQEYREKTAPLSEHYARTGRLKTVDGMADVHTVTAEIEKILA</sequence>
<reference key="1">
    <citation type="submission" date="2000-10" db="EMBL/GenBank/DDBJ databases">
        <title>Isolation and characterization of RpoA from Rhizobium meliloti.</title>
        <authorList>
            <person name="Peck M.C."/>
            <person name="Fisher R.F."/>
            <person name="Long S.R."/>
        </authorList>
    </citation>
    <scope>NUCLEOTIDE SEQUENCE [GENOMIC DNA]</scope>
    <source>
        <strain>1021</strain>
    </source>
</reference>
<reference key="2">
    <citation type="journal article" date="2001" name="Proc. Natl. Acad. Sci. U.S.A.">
        <title>Analysis of the chromosome sequence of the legume symbiont Sinorhizobium meliloti strain 1021.</title>
        <authorList>
            <person name="Capela D."/>
            <person name="Barloy-Hubler F."/>
            <person name="Gouzy J."/>
            <person name="Bothe G."/>
            <person name="Ampe F."/>
            <person name="Batut J."/>
            <person name="Boistard P."/>
            <person name="Becker A."/>
            <person name="Boutry M."/>
            <person name="Cadieu E."/>
            <person name="Dreano S."/>
            <person name="Gloux S."/>
            <person name="Godrie T."/>
            <person name="Goffeau A."/>
            <person name="Kahn D."/>
            <person name="Kiss E."/>
            <person name="Lelaure V."/>
            <person name="Masuy D."/>
            <person name="Pohl T."/>
            <person name="Portetelle D."/>
            <person name="Puehler A."/>
            <person name="Purnelle B."/>
            <person name="Ramsperger U."/>
            <person name="Renard C."/>
            <person name="Thebault P."/>
            <person name="Vandenbol M."/>
            <person name="Weidner S."/>
            <person name="Galibert F."/>
        </authorList>
    </citation>
    <scope>NUCLEOTIDE SEQUENCE [LARGE SCALE GENOMIC DNA]</scope>
    <source>
        <strain>1021</strain>
    </source>
</reference>
<reference key="3">
    <citation type="journal article" date="2001" name="Science">
        <title>The composite genome of the legume symbiont Sinorhizobium meliloti.</title>
        <authorList>
            <person name="Galibert F."/>
            <person name="Finan T.M."/>
            <person name="Long S.R."/>
            <person name="Puehler A."/>
            <person name="Abola P."/>
            <person name="Ampe F."/>
            <person name="Barloy-Hubler F."/>
            <person name="Barnett M.J."/>
            <person name="Becker A."/>
            <person name="Boistard P."/>
            <person name="Bothe G."/>
            <person name="Boutry M."/>
            <person name="Bowser L."/>
            <person name="Buhrmester J."/>
            <person name="Cadieu E."/>
            <person name="Capela D."/>
            <person name="Chain P."/>
            <person name="Cowie A."/>
            <person name="Davis R.W."/>
            <person name="Dreano S."/>
            <person name="Federspiel N.A."/>
            <person name="Fisher R.F."/>
            <person name="Gloux S."/>
            <person name="Godrie T."/>
            <person name="Goffeau A."/>
            <person name="Golding B."/>
            <person name="Gouzy J."/>
            <person name="Gurjal M."/>
            <person name="Hernandez-Lucas I."/>
            <person name="Hong A."/>
            <person name="Huizar L."/>
            <person name="Hyman R.W."/>
            <person name="Jones T."/>
            <person name="Kahn D."/>
            <person name="Kahn M.L."/>
            <person name="Kalman S."/>
            <person name="Keating D.H."/>
            <person name="Kiss E."/>
            <person name="Komp C."/>
            <person name="Lelaure V."/>
            <person name="Masuy D."/>
            <person name="Palm C."/>
            <person name="Peck M.C."/>
            <person name="Pohl T.M."/>
            <person name="Portetelle D."/>
            <person name="Purnelle B."/>
            <person name="Ramsperger U."/>
            <person name="Surzycki R."/>
            <person name="Thebault P."/>
            <person name="Vandenbol M."/>
            <person name="Vorhoelter F.J."/>
            <person name="Weidner S."/>
            <person name="Wells D.H."/>
            <person name="Wong K."/>
            <person name="Yeh K.-C."/>
            <person name="Batut J."/>
        </authorList>
    </citation>
    <scope>NUCLEOTIDE SEQUENCE [LARGE SCALE GENOMIC DNA]</scope>
    <source>
        <strain>1021</strain>
    </source>
</reference>
<feature type="chain" id="PRO_0000158836" description="Adenylate kinase">
    <location>
        <begin position="1"/>
        <end position="192"/>
    </location>
</feature>
<feature type="region of interest" description="NMP" evidence="1">
    <location>
        <begin position="30"/>
        <end position="59"/>
    </location>
</feature>
<feature type="region of interest" description="LID" evidence="1">
    <location>
        <begin position="126"/>
        <end position="142"/>
    </location>
</feature>
<feature type="binding site" evidence="1">
    <location>
        <begin position="10"/>
        <end position="15"/>
    </location>
    <ligand>
        <name>ATP</name>
        <dbReference type="ChEBI" id="CHEBI:30616"/>
    </ligand>
</feature>
<feature type="binding site" evidence="1">
    <location>
        <position position="31"/>
    </location>
    <ligand>
        <name>AMP</name>
        <dbReference type="ChEBI" id="CHEBI:456215"/>
    </ligand>
</feature>
<feature type="binding site" evidence="1">
    <location>
        <position position="36"/>
    </location>
    <ligand>
        <name>AMP</name>
        <dbReference type="ChEBI" id="CHEBI:456215"/>
    </ligand>
</feature>
<feature type="binding site" evidence="1">
    <location>
        <begin position="57"/>
        <end position="59"/>
    </location>
    <ligand>
        <name>AMP</name>
        <dbReference type="ChEBI" id="CHEBI:456215"/>
    </ligand>
</feature>
<feature type="binding site" evidence="1">
    <location>
        <begin position="85"/>
        <end position="88"/>
    </location>
    <ligand>
        <name>AMP</name>
        <dbReference type="ChEBI" id="CHEBI:456215"/>
    </ligand>
</feature>
<feature type="binding site" evidence="1">
    <location>
        <position position="92"/>
    </location>
    <ligand>
        <name>AMP</name>
        <dbReference type="ChEBI" id="CHEBI:456215"/>
    </ligand>
</feature>
<feature type="binding site" evidence="1">
    <location>
        <position position="127"/>
    </location>
    <ligand>
        <name>ATP</name>
        <dbReference type="ChEBI" id="CHEBI:30616"/>
    </ligand>
</feature>
<feature type="binding site" evidence="1">
    <location>
        <position position="139"/>
    </location>
    <ligand>
        <name>AMP</name>
        <dbReference type="ChEBI" id="CHEBI:456215"/>
    </ligand>
</feature>
<feature type="binding site" evidence="1">
    <location>
        <position position="150"/>
    </location>
    <ligand>
        <name>AMP</name>
        <dbReference type="ChEBI" id="CHEBI:456215"/>
    </ligand>
</feature>
<feature type="binding site" evidence="1">
    <location>
        <position position="178"/>
    </location>
    <ligand>
        <name>ATP</name>
        <dbReference type="ChEBI" id="CHEBI:30616"/>
    </ligand>
</feature>
<dbReference type="EC" id="2.7.4.3" evidence="1"/>
<dbReference type="EMBL" id="AF317474">
    <property type="protein sequence ID" value="AAL26898.1"/>
    <property type="molecule type" value="Genomic_DNA"/>
</dbReference>
<dbReference type="EMBL" id="AL591688">
    <property type="protein sequence ID" value="CAC45956.1"/>
    <property type="status" value="ALT_INIT"/>
    <property type="molecule type" value="Genomic_DNA"/>
</dbReference>
<dbReference type="RefSeq" id="NP_385483.2">
    <property type="nucleotide sequence ID" value="NC_003047.1"/>
</dbReference>
<dbReference type="RefSeq" id="WP_003536501.1">
    <property type="nucleotide sequence ID" value="NC_003047.1"/>
</dbReference>
<dbReference type="SMR" id="Q93FE6"/>
<dbReference type="EnsemblBacteria" id="CAC45956">
    <property type="protein sequence ID" value="CAC45956"/>
    <property type="gene ID" value="SMc01288"/>
</dbReference>
<dbReference type="KEGG" id="sme:SMc01288"/>
<dbReference type="PATRIC" id="fig|266834.11.peg.2794"/>
<dbReference type="eggNOG" id="COG0563">
    <property type="taxonomic scope" value="Bacteria"/>
</dbReference>
<dbReference type="OrthoDB" id="9805030at2"/>
<dbReference type="UniPathway" id="UPA00588">
    <property type="reaction ID" value="UER00649"/>
</dbReference>
<dbReference type="Proteomes" id="UP000001976">
    <property type="component" value="Chromosome"/>
</dbReference>
<dbReference type="GO" id="GO:0005737">
    <property type="term" value="C:cytoplasm"/>
    <property type="evidence" value="ECO:0007669"/>
    <property type="project" value="UniProtKB-SubCell"/>
</dbReference>
<dbReference type="GO" id="GO:0004017">
    <property type="term" value="F:adenylate kinase activity"/>
    <property type="evidence" value="ECO:0007669"/>
    <property type="project" value="UniProtKB-UniRule"/>
</dbReference>
<dbReference type="GO" id="GO:0005524">
    <property type="term" value="F:ATP binding"/>
    <property type="evidence" value="ECO:0007669"/>
    <property type="project" value="UniProtKB-UniRule"/>
</dbReference>
<dbReference type="GO" id="GO:0044209">
    <property type="term" value="P:AMP salvage"/>
    <property type="evidence" value="ECO:0007669"/>
    <property type="project" value="UniProtKB-UniRule"/>
</dbReference>
<dbReference type="CDD" id="cd01428">
    <property type="entry name" value="ADK"/>
    <property type="match status" value="1"/>
</dbReference>
<dbReference type="Gene3D" id="3.40.50.300">
    <property type="entry name" value="P-loop containing nucleotide triphosphate hydrolases"/>
    <property type="match status" value="1"/>
</dbReference>
<dbReference type="HAMAP" id="MF_00235">
    <property type="entry name" value="Adenylate_kinase_Adk"/>
    <property type="match status" value="1"/>
</dbReference>
<dbReference type="InterPro" id="IPR006259">
    <property type="entry name" value="Adenyl_kin_sub"/>
</dbReference>
<dbReference type="InterPro" id="IPR000850">
    <property type="entry name" value="Adenylat/UMP-CMP_kin"/>
</dbReference>
<dbReference type="InterPro" id="IPR033690">
    <property type="entry name" value="Adenylat_kinase_CS"/>
</dbReference>
<dbReference type="InterPro" id="IPR027417">
    <property type="entry name" value="P-loop_NTPase"/>
</dbReference>
<dbReference type="NCBIfam" id="TIGR01351">
    <property type="entry name" value="adk"/>
    <property type="match status" value="1"/>
</dbReference>
<dbReference type="NCBIfam" id="NF001381">
    <property type="entry name" value="PRK00279.1-3"/>
    <property type="match status" value="1"/>
</dbReference>
<dbReference type="NCBIfam" id="NF011100">
    <property type="entry name" value="PRK14527.1"/>
    <property type="match status" value="1"/>
</dbReference>
<dbReference type="NCBIfam" id="NF011101">
    <property type="entry name" value="PRK14528.1"/>
    <property type="match status" value="1"/>
</dbReference>
<dbReference type="NCBIfam" id="NF011104">
    <property type="entry name" value="PRK14531.1"/>
    <property type="match status" value="1"/>
</dbReference>
<dbReference type="NCBIfam" id="NF011105">
    <property type="entry name" value="PRK14532.1"/>
    <property type="match status" value="1"/>
</dbReference>
<dbReference type="PANTHER" id="PTHR23359">
    <property type="entry name" value="NUCLEOTIDE KINASE"/>
    <property type="match status" value="1"/>
</dbReference>
<dbReference type="Pfam" id="PF00406">
    <property type="entry name" value="ADK"/>
    <property type="match status" value="1"/>
</dbReference>
<dbReference type="PRINTS" id="PR00094">
    <property type="entry name" value="ADENYLTKNASE"/>
</dbReference>
<dbReference type="SUPFAM" id="SSF52540">
    <property type="entry name" value="P-loop containing nucleoside triphosphate hydrolases"/>
    <property type="match status" value="1"/>
</dbReference>
<dbReference type="PROSITE" id="PS00113">
    <property type="entry name" value="ADENYLATE_KINASE"/>
    <property type="match status" value="1"/>
</dbReference>
<gene>
    <name evidence="1" type="primary">adk</name>
    <name type="ordered locus">R01377</name>
    <name type="ORF">SMc01288</name>
</gene>
<name>KAD_RHIME</name>
<protein>
    <recommendedName>
        <fullName evidence="1">Adenylate kinase</fullName>
        <shortName evidence="1">AK</shortName>
        <ecNumber evidence="1">2.7.4.3</ecNumber>
    </recommendedName>
    <alternativeName>
        <fullName evidence="1">ATP-AMP transphosphorylase</fullName>
    </alternativeName>
    <alternativeName>
        <fullName evidence="1">ATP:AMP phosphotransferase</fullName>
    </alternativeName>
    <alternativeName>
        <fullName evidence="1">Adenylate monophosphate kinase</fullName>
    </alternativeName>
</protein>
<keyword id="KW-0067">ATP-binding</keyword>
<keyword id="KW-0963">Cytoplasm</keyword>
<keyword id="KW-0418">Kinase</keyword>
<keyword id="KW-0545">Nucleotide biosynthesis</keyword>
<keyword id="KW-0547">Nucleotide-binding</keyword>
<keyword id="KW-1185">Reference proteome</keyword>
<keyword id="KW-0808">Transferase</keyword>
<accession>Q93FE6</accession>
<accession>Q92QE9</accession>
<evidence type="ECO:0000255" key="1">
    <source>
        <dbReference type="HAMAP-Rule" id="MF_00235"/>
    </source>
</evidence>
<evidence type="ECO:0000305" key="2"/>
<proteinExistence type="inferred from homology"/>
<organism>
    <name type="scientific">Rhizobium meliloti (strain 1021)</name>
    <name type="common">Ensifer meliloti</name>
    <name type="synonym">Sinorhizobium meliloti</name>
    <dbReference type="NCBI Taxonomy" id="266834"/>
    <lineage>
        <taxon>Bacteria</taxon>
        <taxon>Pseudomonadati</taxon>
        <taxon>Pseudomonadota</taxon>
        <taxon>Alphaproteobacteria</taxon>
        <taxon>Hyphomicrobiales</taxon>
        <taxon>Rhizobiaceae</taxon>
        <taxon>Sinorhizobium/Ensifer group</taxon>
        <taxon>Sinorhizobium</taxon>
    </lineage>
</organism>